<organism>
    <name type="scientific">Bos taurus</name>
    <name type="common">Bovine</name>
    <dbReference type="NCBI Taxonomy" id="9913"/>
    <lineage>
        <taxon>Eukaryota</taxon>
        <taxon>Metazoa</taxon>
        <taxon>Chordata</taxon>
        <taxon>Craniata</taxon>
        <taxon>Vertebrata</taxon>
        <taxon>Euteleostomi</taxon>
        <taxon>Mammalia</taxon>
        <taxon>Eutheria</taxon>
        <taxon>Laurasiatheria</taxon>
        <taxon>Artiodactyla</taxon>
        <taxon>Ruminantia</taxon>
        <taxon>Pecora</taxon>
        <taxon>Bovidae</taxon>
        <taxon>Bovinae</taxon>
        <taxon>Bos</taxon>
    </lineage>
</organism>
<gene>
    <name type="primary">ETFDH</name>
</gene>
<proteinExistence type="evidence at transcript level"/>
<name>ETFD_BOVIN</name>
<reference key="1">
    <citation type="submission" date="2006-01" db="EMBL/GenBank/DDBJ databases">
        <authorList>
            <consortium name="NIH - Mammalian Gene Collection (MGC) project"/>
        </authorList>
    </citation>
    <scope>NUCLEOTIDE SEQUENCE [LARGE SCALE MRNA]</scope>
    <source>
        <strain>Hereford</strain>
        <tissue>Testis</tissue>
    </source>
</reference>
<sequence>MQVLLARLACPVYQCFHAIKIKKNYLPLCATRWSSTSVVPRITTHYTVYPRDQDKRWEGVNMERFAEEADVVIVGAGPAGLSAAARLKQLAAQHEKDIRVCLVEKAAQIGAHTLSGACLDPRALQELFPDWKEKGAPLNTPVTEDRFGILTEKYRIPVPILPGLPMNNHGNYIVRLGHLVSWMGEQAEALGVEVYPGYAAAEVLFHEDGSVKGIATNDVGIQKDGAPKTTFERGLELHAKVTIFAEGCHGHLAKQLYRKFDLRANCEPQTYGIGLKELWVIDEKKWKPGRVDHTVGWPLDRHTYGGSFLYHLNEGEPLVALGFVVGLDYQNPYLSPFREFQRWKHHPSIQPTLEGGKRIAYGARALNEGGLQCIPKLTFPGGLLIGCSPGFMNVPKIKGTHTAMKSGILAAESIFNQLTNENLQSKTIGLDVTEYEDNLKKSWVWKELYAVRNIRPSCHSILGVYGGMIYTGIFYWIFRGMEPWTLKHKGSDSDKLKPAKDCTPIEYPKPDGQISFDLLSSVALSGTNHEHDQPAHLTLKDDSVPVNRNLSIYDGPEQRFCPAGVYEFVPVEQGDGFRLQINAQNCVHCKTCDIKDPSQNINWVVPEGGGGPAYNGM</sequence>
<keyword id="KW-0004">4Fe-4S</keyword>
<keyword id="KW-0007">Acetylation</keyword>
<keyword id="KW-0249">Electron transport</keyword>
<keyword id="KW-0274">FAD</keyword>
<keyword id="KW-0285">Flavoprotein</keyword>
<keyword id="KW-0408">Iron</keyword>
<keyword id="KW-0411">Iron-sulfur</keyword>
<keyword id="KW-0472">Membrane</keyword>
<keyword id="KW-0479">Metal-binding</keyword>
<keyword id="KW-0496">Mitochondrion</keyword>
<keyword id="KW-0999">Mitochondrion inner membrane</keyword>
<keyword id="KW-0560">Oxidoreductase</keyword>
<keyword id="KW-0597">Phosphoprotein</keyword>
<keyword id="KW-1185">Reference proteome</keyword>
<keyword id="KW-0809">Transit peptide</keyword>
<keyword id="KW-0813">Transport</keyword>
<keyword id="KW-0830">Ubiquinone</keyword>
<feature type="transit peptide" description="Mitochondrion" evidence="4">
    <location>
        <begin position="1"/>
        <end position="33"/>
    </location>
</feature>
<feature type="chain" id="PRO_0000285209" description="Electron transfer flavoprotein-ubiquinone oxidoreductase, mitochondrial">
    <location>
        <begin position="34"/>
        <end position="617"/>
    </location>
</feature>
<feature type="intramembrane region" evidence="1">
    <location>
        <begin position="109"/>
        <end position="130"/>
    </location>
</feature>
<feature type="intramembrane region" evidence="1">
    <location>
        <begin position="428"/>
        <end position="447"/>
    </location>
</feature>
<feature type="domain" description="4Fe-4S ferredoxin-type" evidence="5">
    <location>
        <begin position="577"/>
        <end position="606"/>
    </location>
</feature>
<feature type="binding site" evidence="4">
    <location>
        <begin position="71"/>
        <end position="85"/>
    </location>
    <ligand>
        <name>FAD</name>
        <dbReference type="ChEBI" id="CHEBI:57692"/>
    </ligand>
</feature>
<feature type="binding site" evidence="1">
    <location>
        <position position="305"/>
    </location>
    <ligand>
        <name>a ubiquinone</name>
        <dbReference type="ChEBI" id="CHEBI:16389"/>
    </ligand>
</feature>
<feature type="binding site" evidence="1">
    <location>
        <position position="306"/>
    </location>
    <ligand>
        <name>a ubiquinone</name>
        <dbReference type="ChEBI" id="CHEBI:16389"/>
    </ligand>
</feature>
<feature type="binding site" evidence="4">
    <location>
        <position position="561"/>
    </location>
    <ligand>
        <name>[4Fe-4S] cluster</name>
        <dbReference type="ChEBI" id="CHEBI:49883"/>
    </ligand>
</feature>
<feature type="binding site" evidence="4">
    <location>
        <position position="586"/>
    </location>
    <ligand>
        <name>[4Fe-4S] cluster</name>
        <dbReference type="ChEBI" id="CHEBI:49883"/>
    </ligand>
</feature>
<feature type="binding site" evidence="4">
    <location>
        <position position="589"/>
    </location>
    <ligand>
        <name>[4Fe-4S] cluster</name>
        <dbReference type="ChEBI" id="CHEBI:49883"/>
    </ligand>
</feature>
<feature type="binding site" evidence="4">
    <location>
        <position position="592"/>
    </location>
    <ligand>
        <name>[4Fe-4S] cluster</name>
        <dbReference type="ChEBI" id="CHEBI:49883"/>
    </ligand>
</feature>
<feature type="modified residue" description="N6-acetyllysine" evidence="3">
    <location>
        <position position="96"/>
    </location>
</feature>
<feature type="modified residue" description="N6-acetyllysine" evidence="3">
    <location>
        <position position="132"/>
    </location>
</feature>
<feature type="modified residue" description="N6-acetyllysine" evidence="3">
    <location>
        <position position="223"/>
    </location>
</feature>
<feature type="modified residue" description="N6-acetyllysine" evidence="3">
    <location>
        <position position="357"/>
    </location>
</feature>
<feature type="modified residue" description="Phosphoserine" evidence="2">
    <location>
        <position position="551"/>
    </location>
</feature>
<dbReference type="EC" id="1.5.5.1"/>
<dbReference type="EMBL" id="BC112652">
    <property type="protein sequence ID" value="AAI12653.1"/>
    <property type="molecule type" value="mRNA"/>
</dbReference>
<dbReference type="RefSeq" id="NP_001070598.1">
    <property type="nucleotide sequence ID" value="NM_001077130.2"/>
</dbReference>
<dbReference type="SMR" id="Q2KIG0"/>
<dbReference type="FunCoup" id="Q2KIG0">
    <property type="interactions" value="2742"/>
</dbReference>
<dbReference type="STRING" id="9913.ENSBTAP00000057666"/>
<dbReference type="PaxDb" id="9913-ENSBTAP00000022178"/>
<dbReference type="PeptideAtlas" id="Q2KIG0"/>
<dbReference type="GeneID" id="768074"/>
<dbReference type="KEGG" id="bta:768074"/>
<dbReference type="CTD" id="2110"/>
<dbReference type="eggNOG" id="KOG2415">
    <property type="taxonomic scope" value="Eukaryota"/>
</dbReference>
<dbReference type="HOGENOM" id="CLU_009667_4_0_1"/>
<dbReference type="InParanoid" id="Q2KIG0"/>
<dbReference type="OrthoDB" id="437331at2759"/>
<dbReference type="TreeFam" id="TF105687"/>
<dbReference type="Proteomes" id="UP000009136">
    <property type="component" value="Unplaced"/>
</dbReference>
<dbReference type="GO" id="GO:0005743">
    <property type="term" value="C:mitochondrial inner membrane"/>
    <property type="evidence" value="ECO:0000318"/>
    <property type="project" value="GO_Central"/>
</dbReference>
<dbReference type="GO" id="GO:0051539">
    <property type="term" value="F:4 iron, 4 sulfur cluster binding"/>
    <property type="evidence" value="ECO:0007669"/>
    <property type="project" value="UniProtKB-KW"/>
</dbReference>
<dbReference type="GO" id="GO:0004174">
    <property type="term" value="F:electron-transferring-flavoprotein dehydrogenase activity"/>
    <property type="evidence" value="ECO:0000318"/>
    <property type="project" value="GO_Central"/>
</dbReference>
<dbReference type="GO" id="GO:0046872">
    <property type="term" value="F:metal ion binding"/>
    <property type="evidence" value="ECO:0007669"/>
    <property type="project" value="UniProtKB-KW"/>
</dbReference>
<dbReference type="GO" id="GO:0022900">
    <property type="term" value="P:electron transport chain"/>
    <property type="evidence" value="ECO:0000318"/>
    <property type="project" value="GO_Central"/>
</dbReference>
<dbReference type="FunFam" id="3.30.70.20:FF:000088">
    <property type="entry name" value="Electron transfer flavoprotein-ubiquinone oxidoreductase, mitochondrial"/>
    <property type="match status" value="1"/>
</dbReference>
<dbReference type="Gene3D" id="3.30.70.20">
    <property type="match status" value="1"/>
</dbReference>
<dbReference type="Gene3D" id="3.30.9.90">
    <property type="match status" value="1"/>
</dbReference>
<dbReference type="Gene3D" id="3.50.50.60">
    <property type="entry name" value="FAD/NAD(P)-binding domain"/>
    <property type="match status" value="1"/>
</dbReference>
<dbReference type="InterPro" id="IPR017896">
    <property type="entry name" value="4Fe4S_Fe-S-bd"/>
</dbReference>
<dbReference type="InterPro" id="IPR040156">
    <property type="entry name" value="ETF-QO"/>
</dbReference>
<dbReference type="InterPro" id="IPR049398">
    <property type="entry name" value="ETF-QO/FixC_UQ-bd"/>
</dbReference>
<dbReference type="InterPro" id="IPR007859">
    <property type="entry name" value="ETF-QO/FixX_C"/>
</dbReference>
<dbReference type="InterPro" id="IPR036188">
    <property type="entry name" value="FAD/NAD-bd_sf"/>
</dbReference>
<dbReference type="PANTHER" id="PTHR10617">
    <property type="entry name" value="ELECTRON TRANSFER FLAVOPROTEIN-UBIQUINONE OXIDOREDUCTASE"/>
    <property type="match status" value="1"/>
</dbReference>
<dbReference type="PANTHER" id="PTHR10617:SF107">
    <property type="entry name" value="ELECTRON TRANSFER FLAVOPROTEIN-UBIQUINONE OXIDOREDUCTASE, MITOCHONDRIAL"/>
    <property type="match status" value="1"/>
</dbReference>
<dbReference type="Pfam" id="PF21162">
    <property type="entry name" value="ETFQO_UQ-bd"/>
    <property type="match status" value="1"/>
</dbReference>
<dbReference type="Pfam" id="PF05187">
    <property type="entry name" value="Fer4_ETF_QO"/>
    <property type="match status" value="1"/>
</dbReference>
<dbReference type="Pfam" id="PF13450">
    <property type="entry name" value="NAD_binding_8"/>
    <property type="match status" value="1"/>
</dbReference>
<dbReference type="PRINTS" id="PR00411">
    <property type="entry name" value="PNDRDTASEI"/>
</dbReference>
<dbReference type="SUPFAM" id="SSF54862">
    <property type="entry name" value="4Fe-4S ferredoxins"/>
    <property type="match status" value="1"/>
</dbReference>
<dbReference type="SUPFAM" id="SSF54373">
    <property type="entry name" value="FAD-linked reductases, C-terminal domain"/>
    <property type="match status" value="1"/>
</dbReference>
<dbReference type="SUPFAM" id="SSF51905">
    <property type="entry name" value="FAD/NAD(P)-binding domain"/>
    <property type="match status" value="1"/>
</dbReference>
<dbReference type="PROSITE" id="PS51379">
    <property type="entry name" value="4FE4S_FER_2"/>
    <property type="match status" value="1"/>
</dbReference>
<protein>
    <recommendedName>
        <fullName>Electron transfer flavoprotein-ubiquinone oxidoreductase, mitochondrial</fullName>
        <shortName>ETF-QO</shortName>
        <shortName>ETF-ubiquinone oxidoreductase</shortName>
        <ecNumber>1.5.5.1</ecNumber>
    </recommendedName>
    <alternativeName>
        <fullName>Electron-transferring-flavoprotein dehydrogenase</fullName>
        <shortName>ETF dehydrogenase</shortName>
    </alternativeName>
</protein>
<accession>Q2KIG0</accession>
<evidence type="ECO:0000250" key="1"/>
<evidence type="ECO:0000250" key="2">
    <source>
        <dbReference type="UniProtKB" id="Q16134"/>
    </source>
</evidence>
<evidence type="ECO:0000250" key="3">
    <source>
        <dbReference type="UniProtKB" id="Q921G7"/>
    </source>
</evidence>
<evidence type="ECO:0000255" key="4"/>
<evidence type="ECO:0000255" key="5">
    <source>
        <dbReference type="PROSITE-ProRule" id="PRU00711"/>
    </source>
</evidence>
<evidence type="ECO:0000305" key="6"/>
<comment type="function">
    <text evidence="1">Accepts electrons from ETF and reduces ubiquinone.</text>
</comment>
<comment type="catalytic activity">
    <reaction>
        <text>a ubiquinone + reduced [electron-transfer flavoprotein] = a ubiquinol + oxidized [electron-transfer flavoprotein] + H(+)</text>
        <dbReference type="Rhea" id="RHEA:24052"/>
        <dbReference type="Rhea" id="RHEA-COMP:9565"/>
        <dbReference type="Rhea" id="RHEA-COMP:9566"/>
        <dbReference type="Rhea" id="RHEA-COMP:10685"/>
        <dbReference type="Rhea" id="RHEA-COMP:10686"/>
        <dbReference type="ChEBI" id="CHEBI:15378"/>
        <dbReference type="ChEBI" id="CHEBI:16389"/>
        <dbReference type="ChEBI" id="CHEBI:17976"/>
        <dbReference type="ChEBI" id="CHEBI:57692"/>
        <dbReference type="ChEBI" id="CHEBI:58307"/>
        <dbReference type="EC" id="1.5.5.1"/>
    </reaction>
</comment>
<comment type="cofactor">
    <cofactor evidence="1">
        <name>[4Fe-4S] cluster</name>
        <dbReference type="ChEBI" id="CHEBI:49883"/>
    </cofactor>
    <text evidence="1">Binds 1 [4Fe-4S] cluster.</text>
</comment>
<comment type="cofactor">
    <cofactor evidence="1">
        <name>FAD</name>
        <dbReference type="ChEBI" id="CHEBI:57692"/>
    </cofactor>
</comment>
<comment type="subunit">
    <text evidence="1">Monomer.</text>
</comment>
<comment type="subcellular location">
    <subcellularLocation>
        <location evidence="1">Mitochondrion inner membrane</location>
    </subcellularLocation>
</comment>
<comment type="similarity">
    <text evidence="6">Belongs to the ETF-QO/FixC family.</text>
</comment>